<evidence type="ECO:0000255" key="1">
    <source>
        <dbReference type="HAMAP-Rule" id="MF_00688"/>
    </source>
</evidence>
<gene>
    <name evidence="1" type="primary">aat</name>
    <name type="ordered locus">JJD26997_0613</name>
</gene>
<keyword id="KW-0012">Acyltransferase</keyword>
<keyword id="KW-0963">Cytoplasm</keyword>
<keyword id="KW-0808">Transferase</keyword>
<accession>A7H2P8</accession>
<feature type="chain" id="PRO_1000045103" description="Leucyl/phenylalanyl-tRNA--protein transferase">
    <location>
        <begin position="1"/>
        <end position="215"/>
    </location>
</feature>
<proteinExistence type="inferred from homology"/>
<sequence length="215" mass="25157">MESSNLYSKLLNAPKNTPVFLSQNLEADFIVKAYTFGLFPWTSKPVTWWCPDPRCVLNPNQIHIQKNMKKFINLYQIKLDYDFLKLITLCRDARSQSWIDDEFITTYYKLFTQGYAHSLELYENNELIGGIYGLILGKVFFGESMVNIKKNASKVAMIKLCDLLKPYDFIIDCQVYNQHLEFMGAHNISRKEFLNILKEKCNQESGFKNFKDLIT</sequence>
<name>LFTR_CAMJD</name>
<dbReference type="EC" id="2.3.2.6" evidence="1"/>
<dbReference type="EMBL" id="CP000768">
    <property type="protein sequence ID" value="ABS44825.1"/>
    <property type="molecule type" value="Genomic_DNA"/>
</dbReference>
<dbReference type="SMR" id="A7H2P8"/>
<dbReference type="KEGG" id="cjd:JJD26997_0613"/>
<dbReference type="HOGENOM" id="CLU_075045_0_1_7"/>
<dbReference type="Proteomes" id="UP000002302">
    <property type="component" value="Chromosome"/>
</dbReference>
<dbReference type="GO" id="GO:0005737">
    <property type="term" value="C:cytoplasm"/>
    <property type="evidence" value="ECO:0007669"/>
    <property type="project" value="UniProtKB-SubCell"/>
</dbReference>
<dbReference type="GO" id="GO:0008914">
    <property type="term" value="F:leucyl-tRNA--protein transferase activity"/>
    <property type="evidence" value="ECO:0007669"/>
    <property type="project" value="UniProtKB-UniRule"/>
</dbReference>
<dbReference type="GO" id="GO:0030163">
    <property type="term" value="P:protein catabolic process"/>
    <property type="evidence" value="ECO:0007669"/>
    <property type="project" value="UniProtKB-UniRule"/>
</dbReference>
<dbReference type="Gene3D" id="3.40.630.70">
    <property type="entry name" value="Leucyl/phenylalanyl-tRNA-protein transferase, C-terminal domain"/>
    <property type="match status" value="1"/>
</dbReference>
<dbReference type="Gene3D" id="3.30.70.3550">
    <property type="entry name" value="Leucyl/phenylalanyl-tRNA-protein transferase, N-terminal domain"/>
    <property type="match status" value="1"/>
</dbReference>
<dbReference type="HAMAP" id="MF_00688">
    <property type="entry name" value="Leu_Phe_trans"/>
    <property type="match status" value="1"/>
</dbReference>
<dbReference type="InterPro" id="IPR016181">
    <property type="entry name" value="Acyl_CoA_acyltransferase"/>
</dbReference>
<dbReference type="InterPro" id="IPR004616">
    <property type="entry name" value="Leu/Phe-tRNA_Trfase"/>
</dbReference>
<dbReference type="InterPro" id="IPR042203">
    <property type="entry name" value="Leu/Phe-tRNA_Trfase_C"/>
</dbReference>
<dbReference type="InterPro" id="IPR042221">
    <property type="entry name" value="Leu/Phe-tRNA_Trfase_N"/>
</dbReference>
<dbReference type="NCBIfam" id="TIGR00667">
    <property type="entry name" value="aat"/>
    <property type="match status" value="1"/>
</dbReference>
<dbReference type="PANTHER" id="PTHR30098">
    <property type="entry name" value="LEUCYL/PHENYLALANYL-TRNA--PROTEIN TRANSFERASE"/>
    <property type="match status" value="1"/>
</dbReference>
<dbReference type="PANTHER" id="PTHR30098:SF2">
    <property type="entry name" value="LEUCYL_PHENYLALANYL-TRNA--PROTEIN TRANSFERASE"/>
    <property type="match status" value="1"/>
</dbReference>
<dbReference type="Pfam" id="PF03588">
    <property type="entry name" value="Leu_Phe_trans"/>
    <property type="match status" value="1"/>
</dbReference>
<dbReference type="SUPFAM" id="SSF55729">
    <property type="entry name" value="Acyl-CoA N-acyltransferases (Nat)"/>
    <property type="match status" value="1"/>
</dbReference>
<comment type="function">
    <text evidence="1">Functions in the N-end rule pathway of protein degradation where it conjugates Leu, Phe and, less efficiently, Met from aminoacyl-tRNAs to the N-termini of proteins containing an N-terminal arginine or lysine.</text>
</comment>
<comment type="catalytic activity">
    <reaction evidence="1">
        <text>N-terminal L-lysyl-[protein] + L-leucyl-tRNA(Leu) = N-terminal L-leucyl-L-lysyl-[protein] + tRNA(Leu) + H(+)</text>
        <dbReference type="Rhea" id="RHEA:12340"/>
        <dbReference type="Rhea" id="RHEA-COMP:9613"/>
        <dbReference type="Rhea" id="RHEA-COMP:9622"/>
        <dbReference type="Rhea" id="RHEA-COMP:12670"/>
        <dbReference type="Rhea" id="RHEA-COMP:12671"/>
        <dbReference type="ChEBI" id="CHEBI:15378"/>
        <dbReference type="ChEBI" id="CHEBI:65249"/>
        <dbReference type="ChEBI" id="CHEBI:78442"/>
        <dbReference type="ChEBI" id="CHEBI:78494"/>
        <dbReference type="ChEBI" id="CHEBI:133043"/>
        <dbReference type="EC" id="2.3.2.6"/>
    </reaction>
</comment>
<comment type="catalytic activity">
    <reaction evidence="1">
        <text>N-terminal L-arginyl-[protein] + L-leucyl-tRNA(Leu) = N-terminal L-leucyl-L-arginyl-[protein] + tRNA(Leu) + H(+)</text>
        <dbReference type="Rhea" id="RHEA:50416"/>
        <dbReference type="Rhea" id="RHEA-COMP:9613"/>
        <dbReference type="Rhea" id="RHEA-COMP:9622"/>
        <dbReference type="Rhea" id="RHEA-COMP:12672"/>
        <dbReference type="Rhea" id="RHEA-COMP:12673"/>
        <dbReference type="ChEBI" id="CHEBI:15378"/>
        <dbReference type="ChEBI" id="CHEBI:64719"/>
        <dbReference type="ChEBI" id="CHEBI:78442"/>
        <dbReference type="ChEBI" id="CHEBI:78494"/>
        <dbReference type="ChEBI" id="CHEBI:133044"/>
        <dbReference type="EC" id="2.3.2.6"/>
    </reaction>
</comment>
<comment type="catalytic activity">
    <reaction evidence="1">
        <text>L-phenylalanyl-tRNA(Phe) + an N-terminal L-alpha-aminoacyl-[protein] = an N-terminal L-phenylalanyl-L-alpha-aminoacyl-[protein] + tRNA(Phe)</text>
        <dbReference type="Rhea" id="RHEA:43632"/>
        <dbReference type="Rhea" id="RHEA-COMP:9668"/>
        <dbReference type="Rhea" id="RHEA-COMP:9699"/>
        <dbReference type="Rhea" id="RHEA-COMP:10636"/>
        <dbReference type="Rhea" id="RHEA-COMP:10637"/>
        <dbReference type="ChEBI" id="CHEBI:78442"/>
        <dbReference type="ChEBI" id="CHEBI:78531"/>
        <dbReference type="ChEBI" id="CHEBI:78597"/>
        <dbReference type="ChEBI" id="CHEBI:83561"/>
        <dbReference type="EC" id="2.3.2.6"/>
    </reaction>
</comment>
<comment type="subcellular location">
    <subcellularLocation>
        <location evidence="1">Cytoplasm</location>
    </subcellularLocation>
</comment>
<comment type="similarity">
    <text evidence="1">Belongs to the L/F-transferase family.</text>
</comment>
<reference key="1">
    <citation type="submission" date="2007-07" db="EMBL/GenBank/DDBJ databases">
        <title>Complete genome sequence of Campylobacter jejuni subsp doylei 269.97 isolated from human blood.</title>
        <authorList>
            <person name="Fouts D.E."/>
            <person name="Mongodin E.F."/>
            <person name="Puiu D."/>
            <person name="Sebastian Y."/>
            <person name="Miller W.G."/>
            <person name="Mandrell R.E."/>
            <person name="Lastovica A.J."/>
            <person name="Nelson K.E."/>
        </authorList>
    </citation>
    <scope>NUCLEOTIDE SEQUENCE [LARGE SCALE GENOMIC DNA]</scope>
    <source>
        <strain>ATCC BAA-1458 / RM4099 / 269.97</strain>
    </source>
</reference>
<organism>
    <name type="scientific">Campylobacter jejuni subsp. doylei (strain ATCC BAA-1458 / RM4099 / 269.97)</name>
    <dbReference type="NCBI Taxonomy" id="360109"/>
    <lineage>
        <taxon>Bacteria</taxon>
        <taxon>Pseudomonadati</taxon>
        <taxon>Campylobacterota</taxon>
        <taxon>Epsilonproteobacteria</taxon>
        <taxon>Campylobacterales</taxon>
        <taxon>Campylobacteraceae</taxon>
        <taxon>Campylobacter</taxon>
    </lineage>
</organism>
<protein>
    <recommendedName>
        <fullName evidence="1">Leucyl/phenylalanyl-tRNA--protein transferase</fullName>
        <ecNumber evidence="1">2.3.2.6</ecNumber>
    </recommendedName>
    <alternativeName>
        <fullName evidence="1">L/F-transferase</fullName>
    </alternativeName>
    <alternativeName>
        <fullName evidence="1">Leucyltransferase</fullName>
    </alternativeName>
    <alternativeName>
        <fullName evidence="1">Phenyalanyltransferase</fullName>
    </alternativeName>
</protein>